<proteinExistence type="inferred from homology"/>
<sequence length="214" mass="23061">MSKPLTIALSKGRILKETLPLLKAAGIELLEDPAASRKLIFDTTRDDVKIIIIRATDVPPYVQHGAADIGVAGKDVLMEHGGDGVFEPVDLDIARCKLMVAAMKDAPETGSRLRVATKFVNVAKAYYAQQGKQAEVIKLYGAMELAPLVGLADRIVDIVDTGNTLRANGLEPTELIAHISTRVIVNRASMKTRHSDIQTILDKLVEAVASRKAG</sequence>
<keyword id="KW-0028">Amino-acid biosynthesis</keyword>
<keyword id="KW-0067">ATP-binding</keyword>
<keyword id="KW-0963">Cytoplasm</keyword>
<keyword id="KW-0328">Glycosyltransferase</keyword>
<keyword id="KW-0368">Histidine biosynthesis</keyword>
<keyword id="KW-0547">Nucleotide-binding</keyword>
<keyword id="KW-1185">Reference proteome</keyword>
<keyword id="KW-0808">Transferase</keyword>
<gene>
    <name evidence="1" type="primary">hisG</name>
    <name type="ordered locus">ABO_0561</name>
</gene>
<evidence type="ECO:0000255" key="1">
    <source>
        <dbReference type="HAMAP-Rule" id="MF_01018"/>
    </source>
</evidence>
<organism>
    <name type="scientific">Alcanivorax borkumensis (strain ATCC 700651 / DSM 11573 / NCIMB 13689 / SK2)</name>
    <dbReference type="NCBI Taxonomy" id="393595"/>
    <lineage>
        <taxon>Bacteria</taxon>
        <taxon>Pseudomonadati</taxon>
        <taxon>Pseudomonadota</taxon>
        <taxon>Gammaproteobacteria</taxon>
        <taxon>Oceanospirillales</taxon>
        <taxon>Alcanivoracaceae</taxon>
        <taxon>Alcanivorax</taxon>
    </lineage>
</organism>
<reference key="1">
    <citation type="journal article" date="2006" name="Nat. Biotechnol.">
        <title>Genome sequence of the ubiquitous hydrocarbon-degrading marine bacterium Alcanivorax borkumensis.</title>
        <authorList>
            <person name="Schneiker S."/>
            <person name="Martins dos Santos V.A.P."/>
            <person name="Bartels D."/>
            <person name="Bekel T."/>
            <person name="Brecht M."/>
            <person name="Buhrmester J."/>
            <person name="Chernikova T.N."/>
            <person name="Denaro R."/>
            <person name="Ferrer M."/>
            <person name="Gertler C."/>
            <person name="Goesmann A."/>
            <person name="Golyshina O.V."/>
            <person name="Kaminski F."/>
            <person name="Khachane A.N."/>
            <person name="Lang S."/>
            <person name="Linke B."/>
            <person name="McHardy A.C."/>
            <person name="Meyer F."/>
            <person name="Nechitaylo T."/>
            <person name="Puehler A."/>
            <person name="Regenhardt D."/>
            <person name="Rupp O."/>
            <person name="Sabirova J.S."/>
            <person name="Selbitschka W."/>
            <person name="Yakimov M.M."/>
            <person name="Timmis K.N."/>
            <person name="Vorhoelter F.-J."/>
            <person name="Weidner S."/>
            <person name="Kaiser O."/>
            <person name="Golyshin P.N."/>
        </authorList>
    </citation>
    <scope>NUCLEOTIDE SEQUENCE [LARGE SCALE GENOMIC DNA]</scope>
    <source>
        <strain>ATCC 700651 / DSM 11573 / NCIMB 13689 / SK2</strain>
    </source>
</reference>
<feature type="chain" id="PRO_0000319509" description="ATP phosphoribosyltransferase">
    <location>
        <begin position="1"/>
        <end position="214"/>
    </location>
</feature>
<comment type="function">
    <text evidence="1">Catalyzes the condensation of ATP and 5-phosphoribose 1-diphosphate to form N'-(5'-phosphoribosyl)-ATP (PR-ATP). Has a crucial role in the pathway because the rate of histidine biosynthesis seems to be controlled primarily by regulation of HisG enzymatic activity.</text>
</comment>
<comment type="catalytic activity">
    <reaction evidence="1">
        <text>1-(5-phospho-beta-D-ribosyl)-ATP + diphosphate = 5-phospho-alpha-D-ribose 1-diphosphate + ATP</text>
        <dbReference type="Rhea" id="RHEA:18473"/>
        <dbReference type="ChEBI" id="CHEBI:30616"/>
        <dbReference type="ChEBI" id="CHEBI:33019"/>
        <dbReference type="ChEBI" id="CHEBI:58017"/>
        <dbReference type="ChEBI" id="CHEBI:73183"/>
        <dbReference type="EC" id="2.4.2.17"/>
    </reaction>
</comment>
<comment type="pathway">
    <text evidence="1">Amino-acid biosynthesis; L-histidine biosynthesis; L-histidine from 5-phospho-alpha-D-ribose 1-diphosphate: step 1/9.</text>
</comment>
<comment type="subunit">
    <text evidence="1">Heteromultimer composed of HisG and HisZ subunits.</text>
</comment>
<comment type="subcellular location">
    <subcellularLocation>
        <location evidence="1">Cytoplasm</location>
    </subcellularLocation>
</comment>
<comment type="domain">
    <text>Lacks the C-terminal regulatory region which is replaced by HisZ.</text>
</comment>
<comment type="similarity">
    <text evidence="1">Belongs to the ATP phosphoribosyltransferase family. Short subfamily.</text>
</comment>
<accession>Q0VS39</accession>
<name>HIS1_ALCBS</name>
<protein>
    <recommendedName>
        <fullName evidence="1">ATP phosphoribosyltransferase</fullName>
        <shortName evidence="1">ATP-PRT</shortName>
        <shortName evidence="1">ATP-PRTase</shortName>
        <ecNumber evidence="1">2.4.2.17</ecNumber>
    </recommendedName>
</protein>
<dbReference type="EC" id="2.4.2.17" evidence="1"/>
<dbReference type="EMBL" id="AM286690">
    <property type="protein sequence ID" value="CAL16009.1"/>
    <property type="molecule type" value="Genomic_DNA"/>
</dbReference>
<dbReference type="RefSeq" id="WP_011587847.1">
    <property type="nucleotide sequence ID" value="NC_008260.1"/>
</dbReference>
<dbReference type="SMR" id="Q0VS39"/>
<dbReference type="STRING" id="393595.ABO_0561"/>
<dbReference type="KEGG" id="abo:ABO_0561"/>
<dbReference type="eggNOG" id="COG0040">
    <property type="taxonomic scope" value="Bacteria"/>
</dbReference>
<dbReference type="HOGENOM" id="CLU_038115_2_0_6"/>
<dbReference type="OrthoDB" id="9801867at2"/>
<dbReference type="UniPathway" id="UPA00031">
    <property type="reaction ID" value="UER00006"/>
</dbReference>
<dbReference type="Proteomes" id="UP000008871">
    <property type="component" value="Chromosome"/>
</dbReference>
<dbReference type="GO" id="GO:0005737">
    <property type="term" value="C:cytoplasm"/>
    <property type="evidence" value="ECO:0007669"/>
    <property type="project" value="UniProtKB-SubCell"/>
</dbReference>
<dbReference type="GO" id="GO:0005524">
    <property type="term" value="F:ATP binding"/>
    <property type="evidence" value="ECO:0007669"/>
    <property type="project" value="UniProtKB-KW"/>
</dbReference>
<dbReference type="GO" id="GO:0003879">
    <property type="term" value="F:ATP phosphoribosyltransferase activity"/>
    <property type="evidence" value="ECO:0007669"/>
    <property type="project" value="UniProtKB-UniRule"/>
</dbReference>
<dbReference type="GO" id="GO:0000105">
    <property type="term" value="P:L-histidine biosynthetic process"/>
    <property type="evidence" value="ECO:0007669"/>
    <property type="project" value="UniProtKB-UniRule"/>
</dbReference>
<dbReference type="CDD" id="cd13595">
    <property type="entry name" value="PBP2_HisGs"/>
    <property type="match status" value="1"/>
</dbReference>
<dbReference type="FunFam" id="3.40.190.10:FF:000011">
    <property type="entry name" value="ATP phosphoribosyltransferase"/>
    <property type="match status" value="1"/>
</dbReference>
<dbReference type="Gene3D" id="3.40.190.10">
    <property type="entry name" value="Periplasmic binding protein-like II"/>
    <property type="match status" value="2"/>
</dbReference>
<dbReference type="HAMAP" id="MF_01018">
    <property type="entry name" value="HisG_Short"/>
    <property type="match status" value="1"/>
</dbReference>
<dbReference type="InterPro" id="IPR013820">
    <property type="entry name" value="ATP_PRibTrfase_cat"/>
</dbReference>
<dbReference type="InterPro" id="IPR018198">
    <property type="entry name" value="ATP_PRibTrfase_CS"/>
</dbReference>
<dbReference type="InterPro" id="IPR001348">
    <property type="entry name" value="ATP_PRibTrfase_HisG"/>
</dbReference>
<dbReference type="InterPro" id="IPR024893">
    <property type="entry name" value="ATP_PRibTrfase_HisG_short"/>
</dbReference>
<dbReference type="NCBIfam" id="TIGR00070">
    <property type="entry name" value="hisG"/>
    <property type="match status" value="1"/>
</dbReference>
<dbReference type="PANTHER" id="PTHR21403:SF8">
    <property type="entry name" value="ATP PHOSPHORIBOSYLTRANSFERASE"/>
    <property type="match status" value="1"/>
</dbReference>
<dbReference type="PANTHER" id="PTHR21403">
    <property type="entry name" value="ATP PHOSPHORIBOSYLTRANSFERASE ATP-PRTASE"/>
    <property type="match status" value="1"/>
</dbReference>
<dbReference type="Pfam" id="PF01634">
    <property type="entry name" value="HisG"/>
    <property type="match status" value="1"/>
</dbReference>
<dbReference type="SUPFAM" id="SSF53850">
    <property type="entry name" value="Periplasmic binding protein-like II"/>
    <property type="match status" value="1"/>
</dbReference>
<dbReference type="PROSITE" id="PS01316">
    <property type="entry name" value="ATP_P_PHORIBOSYLTR"/>
    <property type="match status" value="1"/>
</dbReference>